<evidence type="ECO:0000255" key="1">
    <source>
        <dbReference type="HAMAP-Rule" id="MF_01012"/>
    </source>
</evidence>
<sequence length="376" mass="41940">MQCALYDAGRCRSCQWIVQPIRDQLSAKTADLKGLLADFSVEQWCAPVSGPEQAFRNKAKMVVSGSVEKPLLGMLHRDGTPEDLSDCPLYPDTFAPVFATLKPFIARAGLTPYNVARKRGELKYILLTESQFDGGMMLRFVLRSETKLAQLRAALPWLQAQLPQLKVITANIQPVHMAIMEGETEIFLTEQQALAERFNDVPLWIRPQSFFQTNPVVASHLYATARDWVRQLPVHHMWDLFCGVGGFGLHCATPEMTLTGIEIAPEAIACAKQSAAELGLTNLHFQALDSTQFATGQGEVPELVLVNPPRRGIGKALCDYLSQMAPEYIIYSSCNAQTMAKDIANLPGYRIERVQLFDMFPHTAHYEVLTLLTKTR</sequence>
<accession>A8AIQ7</accession>
<feature type="chain" id="PRO_1000062997" description="23S rRNA (uracil(747)-C(5))-methyltransferase RlmC">
    <location>
        <begin position="1"/>
        <end position="376"/>
    </location>
</feature>
<feature type="active site" description="Nucleophile" evidence="1">
    <location>
        <position position="334"/>
    </location>
</feature>
<feature type="binding site" evidence="1">
    <location>
        <position position="3"/>
    </location>
    <ligand>
        <name>[4Fe-4S] cluster</name>
        <dbReference type="ChEBI" id="CHEBI:49883"/>
    </ligand>
</feature>
<feature type="binding site" evidence="1">
    <location>
        <position position="11"/>
    </location>
    <ligand>
        <name>[4Fe-4S] cluster</name>
        <dbReference type="ChEBI" id="CHEBI:49883"/>
    </ligand>
</feature>
<feature type="binding site" evidence="1">
    <location>
        <position position="14"/>
    </location>
    <ligand>
        <name>[4Fe-4S] cluster</name>
        <dbReference type="ChEBI" id="CHEBI:49883"/>
    </ligand>
</feature>
<feature type="binding site" evidence="1">
    <location>
        <position position="87"/>
    </location>
    <ligand>
        <name>[4Fe-4S] cluster</name>
        <dbReference type="ChEBI" id="CHEBI:49883"/>
    </ligand>
</feature>
<feature type="binding site" evidence="1">
    <location>
        <position position="212"/>
    </location>
    <ligand>
        <name>S-adenosyl-L-methionine</name>
        <dbReference type="ChEBI" id="CHEBI:59789"/>
    </ligand>
</feature>
<feature type="binding site" evidence="1">
    <location>
        <position position="241"/>
    </location>
    <ligand>
        <name>S-adenosyl-L-methionine</name>
        <dbReference type="ChEBI" id="CHEBI:59789"/>
    </ligand>
</feature>
<feature type="binding site" evidence="1">
    <location>
        <position position="262"/>
    </location>
    <ligand>
        <name>S-adenosyl-L-methionine</name>
        <dbReference type="ChEBI" id="CHEBI:59789"/>
    </ligand>
</feature>
<feature type="binding site" evidence="1">
    <location>
        <position position="307"/>
    </location>
    <ligand>
        <name>S-adenosyl-L-methionine</name>
        <dbReference type="ChEBI" id="CHEBI:59789"/>
    </ligand>
</feature>
<reference key="1">
    <citation type="submission" date="2007-08" db="EMBL/GenBank/DDBJ databases">
        <authorList>
            <consortium name="The Citrobacter koseri Genome Sequencing Project"/>
            <person name="McClelland M."/>
            <person name="Sanderson E.K."/>
            <person name="Porwollik S."/>
            <person name="Spieth J."/>
            <person name="Clifton W.S."/>
            <person name="Latreille P."/>
            <person name="Courtney L."/>
            <person name="Wang C."/>
            <person name="Pepin K."/>
            <person name="Bhonagiri V."/>
            <person name="Nash W."/>
            <person name="Johnson M."/>
            <person name="Thiruvilangam P."/>
            <person name="Wilson R."/>
        </authorList>
    </citation>
    <scope>NUCLEOTIDE SEQUENCE [LARGE SCALE GENOMIC DNA]</scope>
    <source>
        <strain>ATCC BAA-895 / CDC 4225-83 / SGSC4696</strain>
    </source>
</reference>
<protein>
    <recommendedName>
        <fullName evidence="1">23S rRNA (uracil(747)-C(5))-methyltransferase RlmC</fullName>
        <ecNumber evidence="1">2.1.1.189</ecNumber>
    </recommendedName>
    <alternativeName>
        <fullName evidence="1">23S rRNA(m5U747)-methyltransferase</fullName>
    </alternativeName>
</protein>
<keyword id="KW-0004">4Fe-4S</keyword>
<keyword id="KW-0408">Iron</keyword>
<keyword id="KW-0411">Iron-sulfur</keyword>
<keyword id="KW-0479">Metal-binding</keyword>
<keyword id="KW-0489">Methyltransferase</keyword>
<keyword id="KW-1185">Reference proteome</keyword>
<keyword id="KW-0698">rRNA processing</keyword>
<keyword id="KW-0949">S-adenosyl-L-methionine</keyword>
<keyword id="KW-0808">Transferase</keyword>
<comment type="function">
    <text evidence="1">Catalyzes the formation of 5-methyl-uridine at position 747 (m5U747) in 23S rRNA.</text>
</comment>
<comment type="catalytic activity">
    <reaction evidence="1">
        <text>uridine(747) in 23S rRNA + S-adenosyl-L-methionine = 5-methyluridine(747) in 23S rRNA + S-adenosyl-L-homocysteine + H(+)</text>
        <dbReference type="Rhea" id="RHEA:42628"/>
        <dbReference type="Rhea" id="RHEA-COMP:10154"/>
        <dbReference type="Rhea" id="RHEA-COMP:10155"/>
        <dbReference type="ChEBI" id="CHEBI:15378"/>
        <dbReference type="ChEBI" id="CHEBI:57856"/>
        <dbReference type="ChEBI" id="CHEBI:59789"/>
        <dbReference type="ChEBI" id="CHEBI:65315"/>
        <dbReference type="ChEBI" id="CHEBI:74447"/>
        <dbReference type="EC" id="2.1.1.189"/>
    </reaction>
</comment>
<comment type="similarity">
    <text evidence="1">Belongs to the class I-like SAM-binding methyltransferase superfamily. RNA M5U methyltransferase family. RlmC subfamily.</text>
</comment>
<dbReference type="EC" id="2.1.1.189" evidence="1"/>
<dbReference type="EMBL" id="CP000822">
    <property type="protein sequence ID" value="ABV13370.1"/>
    <property type="molecule type" value="Genomic_DNA"/>
</dbReference>
<dbReference type="RefSeq" id="WP_012133097.1">
    <property type="nucleotide sequence ID" value="NC_009792.1"/>
</dbReference>
<dbReference type="SMR" id="A8AIQ7"/>
<dbReference type="STRING" id="290338.CKO_02247"/>
<dbReference type="GeneID" id="45136169"/>
<dbReference type="KEGG" id="cko:CKO_02247"/>
<dbReference type="HOGENOM" id="CLU_014689_0_0_6"/>
<dbReference type="OrthoDB" id="9804590at2"/>
<dbReference type="Proteomes" id="UP000008148">
    <property type="component" value="Chromosome"/>
</dbReference>
<dbReference type="GO" id="GO:0051539">
    <property type="term" value="F:4 iron, 4 sulfur cluster binding"/>
    <property type="evidence" value="ECO:0007669"/>
    <property type="project" value="UniProtKB-KW"/>
</dbReference>
<dbReference type="GO" id="GO:0005506">
    <property type="term" value="F:iron ion binding"/>
    <property type="evidence" value="ECO:0007669"/>
    <property type="project" value="UniProtKB-UniRule"/>
</dbReference>
<dbReference type="GO" id="GO:0070041">
    <property type="term" value="F:rRNA (uridine-C5-)-methyltransferase activity"/>
    <property type="evidence" value="ECO:0007669"/>
    <property type="project" value="UniProtKB-UniRule"/>
</dbReference>
<dbReference type="GO" id="GO:0070475">
    <property type="term" value="P:rRNA base methylation"/>
    <property type="evidence" value="ECO:0007669"/>
    <property type="project" value="TreeGrafter"/>
</dbReference>
<dbReference type="CDD" id="cd02440">
    <property type="entry name" value="AdoMet_MTases"/>
    <property type="match status" value="1"/>
</dbReference>
<dbReference type="FunFam" id="2.40.50.1070:FF:000002">
    <property type="entry name" value="23S rRNA (uracil(747)-C(5))-methyltransferase RlmC"/>
    <property type="match status" value="1"/>
</dbReference>
<dbReference type="FunFam" id="3.40.50.150:FF:000049">
    <property type="entry name" value="23S rRNA (uracil(747)-C(5))-methyltransferase RlmC"/>
    <property type="match status" value="1"/>
</dbReference>
<dbReference type="Gene3D" id="2.40.50.1070">
    <property type="match status" value="1"/>
</dbReference>
<dbReference type="Gene3D" id="3.40.50.150">
    <property type="entry name" value="Vaccinia Virus protein VP39"/>
    <property type="match status" value="1"/>
</dbReference>
<dbReference type="HAMAP" id="MF_01012">
    <property type="entry name" value="23SrRNA_methyltr_RlmC"/>
    <property type="match status" value="1"/>
</dbReference>
<dbReference type="InterPro" id="IPR011825">
    <property type="entry name" value="23SrRNA_MeTrfase_RlmC"/>
</dbReference>
<dbReference type="InterPro" id="IPR030390">
    <property type="entry name" value="MeTrfase_TrmA_AS"/>
</dbReference>
<dbReference type="InterPro" id="IPR030391">
    <property type="entry name" value="MeTrfase_TrmA_CS"/>
</dbReference>
<dbReference type="InterPro" id="IPR029063">
    <property type="entry name" value="SAM-dependent_MTases_sf"/>
</dbReference>
<dbReference type="InterPro" id="IPR010280">
    <property type="entry name" value="U5_MeTrfase_fam"/>
</dbReference>
<dbReference type="NCBIfam" id="TIGR02085">
    <property type="entry name" value="meth_trns_rumB"/>
    <property type="match status" value="1"/>
</dbReference>
<dbReference type="PANTHER" id="PTHR11061">
    <property type="entry name" value="RNA M5U METHYLTRANSFERASE"/>
    <property type="match status" value="1"/>
</dbReference>
<dbReference type="PANTHER" id="PTHR11061:SF30">
    <property type="entry name" value="TRNA (URACIL(54)-C(5))-METHYLTRANSFERASE"/>
    <property type="match status" value="1"/>
</dbReference>
<dbReference type="Pfam" id="PF05958">
    <property type="entry name" value="tRNA_U5-meth_tr"/>
    <property type="match status" value="1"/>
</dbReference>
<dbReference type="SUPFAM" id="SSF53335">
    <property type="entry name" value="S-adenosyl-L-methionine-dependent methyltransferases"/>
    <property type="match status" value="1"/>
</dbReference>
<dbReference type="PROSITE" id="PS51687">
    <property type="entry name" value="SAM_MT_RNA_M5U"/>
    <property type="match status" value="1"/>
</dbReference>
<dbReference type="PROSITE" id="PS01230">
    <property type="entry name" value="TRMA_1"/>
    <property type="match status" value="1"/>
</dbReference>
<dbReference type="PROSITE" id="PS01231">
    <property type="entry name" value="TRMA_2"/>
    <property type="match status" value="1"/>
</dbReference>
<proteinExistence type="inferred from homology"/>
<name>RLMC_CITK8</name>
<organism>
    <name type="scientific">Citrobacter koseri (strain ATCC BAA-895 / CDC 4225-83 / SGSC4696)</name>
    <dbReference type="NCBI Taxonomy" id="290338"/>
    <lineage>
        <taxon>Bacteria</taxon>
        <taxon>Pseudomonadati</taxon>
        <taxon>Pseudomonadota</taxon>
        <taxon>Gammaproteobacteria</taxon>
        <taxon>Enterobacterales</taxon>
        <taxon>Enterobacteriaceae</taxon>
        <taxon>Citrobacter</taxon>
    </lineage>
</organism>
<gene>
    <name evidence="1" type="primary">rlmC</name>
    <name type="synonym">rumB</name>
    <name type="ordered locus">CKO_02247</name>
</gene>